<keyword id="KW-0143">Chaperone</keyword>
<proteinExistence type="inferred from homology"/>
<gene>
    <name evidence="1" type="primary">hscB</name>
    <name type="ordered locus">YPDSF_2238</name>
</gene>
<name>HSCB_YERPP</name>
<feature type="chain" id="PRO_1000083057" description="Co-chaperone protein HscB">
    <location>
        <begin position="1"/>
        <end position="174"/>
    </location>
</feature>
<feature type="domain" description="J" evidence="1">
    <location>
        <begin position="2"/>
        <end position="74"/>
    </location>
</feature>
<comment type="function">
    <text evidence="1">Co-chaperone involved in the maturation of iron-sulfur cluster-containing proteins. Seems to help targeting proteins to be folded toward HscA.</text>
</comment>
<comment type="subunit">
    <text evidence="1">Interacts with HscA and stimulates its ATPase activity. Interacts with IscU.</text>
</comment>
<comment type="similarity">
    <text evidence="1">Belongs to the HscB family.</text>
</comment>
<dbReference type="EMBL" id="CP000668">
    <property type="protein sequence ID" value="ABP40613.1"/>
    <property type="molecule type" value="Genomic_DNA"/>
</dbReference>
<dbReference type="RefSeq" id="WP_002209833.1">
    <property type="nucleotide sequence ID" value="NZ_CP009715.1"/>
</dbReference>
<dbReference type="SMR" id="A4TMV1"/>
<dbReference type="GeneID" id="57975850"/>
<dbReference type="KEGG" id="ypp:YPDSF_2238"/>
<dbReference type="PATRIC" id="fig|386656.14.peg.3727"/>
<dbReference type="GO" id="GO:1990230">
    <property type="term" value="C:iron-sulfur cluster transfer complex"/>
    <property type="evidence" value="ECO:0007669"/>
    <property type="project" value="TreeGrafter"/>
</dbReference>
<dbReference type="GO" id="GO:0001671">
    <property type="term" value="F:ATPase activator activity"/>
    <property type="evidence" value="ECO:0007669"/>
    <property type="project" value="InterPro"/>
</dbReference>
<dbReference type="GO" id="GO:0051087">
    <property type="term" value="F:protein-folding chaperone binding"/>
    <property type="evidence" value="ECO:0007669"/>
    <property type="project" value="InterPro"/>
</dbReference>
<dbReference type="GO" id="GO:0044571">
    <property type="term" value="P:[2Fe-2S] cluster assembly"/>
    <property type="evidence" value="ECO:0007669"/>
    <property type="project" value="InterPro"/>
</dbReference>
<dbReference type="GO" id="GO:0051259">
    <property type="term" value="P:protein complex oligomerization"/>
    <property type="evidence" value="ECO:0007669"/>
    <property type="project" value="InterPro"/>
</dbReference>
<dbReference type="GO" id="GO:0006457">
    <property type="term" value="P:protein folding"/>
    <property type="evidence" value="ECO:0007669"/>
    <property type="project" value="UniProtKB-UniRule"/>
</dbReference>
<dbReference type="CDD" id="cd06257">
    <property type="entry name" value="DnaJ"/>
    <property type="match status" value="1"/>
</dbReference>
<dbReference type="FunFam" id="1.10.287.110:FF:000008">
    <property type="entry name" value="Co-chaperone protein HscB"/>
    <property type="match status" value="1"/>
</dbReference>
<dbReference type="Gene3D" id="1.10.287.110">
    <property type="entry name" value="DnaJ domain"/>
    <property type="match status" value="1"/>
</dbReference>
<dbReference type="Gene3D" id="1.20.1280.20">
    <property type="entry name" value="HscB, C-terminal domain"/>
    <property type="match status" value="1"/>
</dbReference>
<dbReference type="HAMAP" id="MF_00682">
    <property type="entry name" value="HscB"/>
    <property type="match status" value="1"/>
</dbReference>
<dbReference type="InterPro" id="IPR001623">
    <property type="entry name" value="DnaJ_domain"/>
</dbReference>
<dbReference type="InterPro" id="IPR004640">
    <property type="entry name" value="HscB"/>
</dbReference>
<dbReference type="InterPro" id="IPR036386">
    <property type="entry name" value="HscB_C_sf"/>
</dbReference>
<dbReference type="InterPro" id="IPR009073">
    <property type="entry name" value="HscB_oligo_C"/>
</dbReference>
<dbReference type="InterPro" id="IPR036869">
    <property type="entry name" value="J_dom_sf"/>
</dbReference>
<dbReference type="NCBIfam" id="TIGR00714">
    <property type="entry name" value="hscB"/>
    <property type="match status" value="1"/>
</dbReference>
<dbReference type="NCBIfam" id="NF003449">
    <property type="entry name" value="PRK05014.1"/>
    <property type="match status" value="1"/>
</dbReference>
<dbReference type="PANTHER" id="PTHR14021">
    <property type="entry name" value="IRON-SULFUR CLUSTER CO-CHAPERONE PROTEIN HSCB"/>
    <property type="match status" value="1"/>
</dbReference>
<dbReference type="PANTHER" id="PTHR14021:SF15">
    <property type="entry name" value="IRON-SULFUR CLUSTER CO-CHAPERONE PROTEIN HSCB"/>
    <property type="match status" value="1"/>
</dbReference>
<dbReference type="Pfam" id="PF00226">
    <property type="entry name" value="DnaJ"/>
    <property type="match status" value="1"/>
</dbReference>
<dbReference type="Pfam" id="PF07743">
    <property type="entry name" value="HSCB_C"/>
    <property type="match status" value="1"/>
</dbReference>
<dbReference type="SMART" id="SM00271">
    <property type="entry name" value="DnaJ"/>
    <property type="match status" value="1"/>
</dbReference>
<dbReference type="SUPFAM" id="SSF46565">
    <property type="entry name" value="Chaperone J-domain"/>
    <property type="match status" value="1"/>
</dbReference>
<dbReference type="SUPFAM" id="SSF47144">
    <property type="entry name" value="HSC20 (HSCB), C-terminal oligomerisation domain"/>
    <property type="match status" value="1"/>
</dbReference>
<dbReference type="PROSITE" id="PS50076">
    <property type="entry name" value="DNAJ_2"/>
    <property type="match status" value="1"/>
</dbReference>
<protein>
    <recommendedName>
        <fullName evidence="1">Co-chaperone protein HscB</fullName>
    </recommendedName>
    <alternativeName>
        <fullName evidence="1">Hsc20</fullName>
    </alternativeName>
</protein>
<accession>A4TMV1</accession>
<sequence>MDYFTLFGLPARYLIDGNQLTTRYQELQRQFHPDRFATQPERERLASMQQAATINDAYQTLKHPLKRAEYMLSLQGFDLGNEQHTMRDTAFLMEQLELREELDAIERKPDAETLLAEFSRRVAQMTTTRTQQMVEQLDAQLWVQAADTVRKLRFLDKLQQQVEQLEERLFDDFA</sequence>
<organism>
    <name type="scientific">Yersinia pestis (strain Pestoides F)</name>
    <dbReference type="NCBI Taxonomy" id="386656"/>
    <lineage>
        <taxon>Bacteria</taxon>
        <taxon>Pseudomonadati</taxon>
        <taxon>Pseudomonadota</taxon>
        <taxon>Gammaproteobacteria</taxon>
        <taxon>Enterobacterales</taxon>
        <taxon>Yersiniaceae</taxon>
        <taxon>Yersinia</taxon>
    </lineage>
</organism>
<evidence type="ECO:0000255" key="1">
    <source>
        <dbReference type="HAMAP-Rule" id="MF_00682"/>
    </source>
</evidence>
<reference key="1">
    <citation type="submission" date="2007-02" db="EMBL/GenBank/DDBJ databases">
        <title>Complete sequence of chromosome of Yersinia pestis Pestoides F.</title>
        <authorList>
            <consortium name="US DOE Joint Genome Institute"/>
            <person name="Copeland A."/>
            <person name="Lucas S."/>
            <person name="Lapidus A."/>
            <person name="Barry K."/>
            <person name="Detter J.C."/>
            <person name="Glavina del Rio T."/>
            <person name="Hammon N."/>
            <person name="Israni S."/>
            <person name="Dalin E."/>
            <person name="Tice H."/>
            <person name="Pitluck S."/>
            <person name="Di Bartolo G."/>
            <person name="Chain P."/>
            <person name="Malfatti S."/>
            <person name="Shin M."/>
            <person name="Vergez L."/>
            <person name="Schmutz J."/>
            <person name="Larimer F."/>
            <person name="Land M."/>
            <person name="Hauser L."/>
            <person name="Worsham P."/>
            <person name="Chu M."/>
            <person name="Bearden S."/>
            <person name="Garcia E."/>
            <person name="Richardson P."/>
        </authorList>
    </citation>
    <scope>NUCLEOTIDE SEQUENCE [LARGE SCALE GENOMIC DNA]</scope>
    <source>
        <strain>Pestoides F</strain>
    </source>
</reference>